<comment type="function">
    <text>The primary product of this enzyme is 4,2',4',6'-tetrahydroxychalcone (also termed naringenin-chalcone or chalcone) which can under specific conditions spontaneously isomerize into naringenin.</text>
</comment>
<comment type="catalytic activity">
    <reaction evidence="1">
        <text>(E)-4-coumaroyl-CoA + 3 malonyl-CoA + 3 H(+) = 2',4,4',6'-tetrahydroxychalcone + 3 CO2 + 4 CoA</text>
        <dbReference type="Rhea" id="RHEA:11128"/>
        <dbReference type="ChEBI" id="CHEBI:15378"/>
        <dbReference type="ChEBI" id="CHEBI:15413"/>
        <dbReference type="ChEBI" id="CHEBI:16526"/>
        <dbReference type="ChEBI" id="CHEBI:57287"/>
        <dbReference type="ChEBI" id="CHEBI:57384"/>
        <dbReference type="ChEBI" id="CHEBI:85008"/>
        <dbReference type="EC" id="2.3.1.74"/>
    </reaction>
</comment>
<comment type="pathway">
    <text>Secondary metabolite biosynthesis; flavonoid biosynthesis.</text>
</comment>
<comment type="similarity">
    <text evidence="2">Belongs to the thiolase-like superfamily. Chalcone/stilbene synthases family.</text>
</comment>
<reference key="1">
    <citation type="journal article" date="1994" name="Gene">
        <title>In Trifolium subterraneum, chalcone synthase is encoded by a multigene family.</title>
        <authorList>
            <person name="Arioli T."/>
            <person name="Howles P.A."/>
            <person name="Weinman J.J."/>
            <person name="Rolfe B.G."/>
        </authorList>
    </citation>
    <scope>NUCLEOTIDE SEQUENCE</scope>
    <source>
        <strain>cv. Karridale</strain>
        <tissue>Leaf</tissue>
        <tissue>Stem</tissue>
    </source>
</reference>
<feature type="chain" id="PRO_0000216068" description="Chalcone synthase 1">
    <location>
        <begin position="1"/>
        <end position="389"/>
    </location>
</feature>
<feature type="active site" evidence="1">
    <location>
        <position position="164"/>
    </location>
</feature>
<keyword id="KW-0012">Acyltransferase</keyword>
<keyword id="KW-0284">Flavonoid biosynthesis</keyword>
<keyword id="KW-0808">Transferase</keyword>
<protein>
    <recommendedName>
        <fullName>Chalcone synthase 1</fullName>
        <ecNumber>2.3.1.74</ecNumber>
    </recommendedName>
    <alternativeName>
        <fullName>Naringenin-chalcone synthase 1</fullName>
    </alternativeName>
</protein>
<sequence length="389" mass="42741">MVSVAEIRKAQRAEGPATILAIGTANPPNRVEQATYPDFYFKITNSEHKVELKEKFQRMCDKSMIKSRYMYLTEEILKENPSVCEYMAPSLDARQDMVVVEVPRLGKEAAVKAIKEWGQPKSKITHLIFCTTSGVDMPGADYQLTKLLGLRPYVKRYMMYQQGCFAGGTVLRLAKDLAENNKGARVLVVCSEVTAVTFRGPSDTHLDSLVGQALFGDGAAALIVGSDPVPEIEKPIFEMVWTAQTIAPDSEGAIDGHLREAGLTFHLLKDVPGIVSKNIDKALVEAFQPLNISDYNSIFWIAHPGGPAILDQVEQKLSLKPEKMKATRDVLSEYGNMSSACVLFILDEMRKKSAQDGLKTTGEGLEWGVLFGFGPGLTIETVVLHSVAI</sequence>
<gene>
    <name type="primary">CHS1</name>
</gene>
<dbReference type="EC" id="2.3.1.74"/>
<dbReference type="EMBL" id="M91193">
    <property type="protein sequence ID" value="AAA18176.1"/>
    <property type="molecule type" value="Unassigned_DNA"/>
</dbReference>
<dbReference type="SMR" id="P51083"/>
<dbReference type="UniPathway" id="UPA00154"/>
<dbReference type="GO" id="GO:0016210">
    <property type="term" value="F:naringenin-chalcone synthase activity"/>
    <property type="evidence" value="ECO:0007669"/>
    <property type="project" value="UniProtKB-EC"/>
</dbReference>
<dbReference type="GO" id="GO:0009813">
    <property type="term" value="P:flavonoid biosynthetic process"/>
    <property type="evidence" value="ECO:0007669"/>
    <property type="project" value="UniProtKB-UniPathway"/>
</dbReference>
<dbReference type="GO" id="GO:0030639">
    <property type="term" value="P:polyketide biosynthetic process"/>
    <property type="evidence" value="ECO:0007669"/>
    <property type="project" value="TreeGrafter"/>
</dbReference>
<dbReference type="CDD" id="cd00831">
    <property type="entry name" value="CHS_like"/>
    <property type="match status" value="1"/>
</dbReference>
<dbReference type="FunFam" id="3.40.47.10:FF:000014">
    <property type="entry name" value="Chalcone synthase 1"/>
    <property type="match status" value="1"/>
</dbReference>
<dbReference type="FunFam" id="3.40.47.10:FF:000025">
    <property type="entry name" value="Chalcone synthase 2"/>
    <property type="match status" value="1"/>
</dbReference>
<dbReference type="Gene3D" id="3.40.47.10">
    <property type="match status" value="2"/>
</dbReference>
<dbReference type="InterPro" id="IPR012328">
    <property type="entry name" value="Chalcone/stilbene_synt_C"/>
</dbReference>
<dbReference type="InterPro" id="IPR001099">
    <property type="entry name" value="Chalcone/stilbene_synt_N"/>
</dbReference>
<dbReference type="InterPro" id="IPR018088">
    <property type="entry name" value="Chalcone/stilbene_synthase_AS"/>
</dbReference>
<dbReference type="InterPro" id="IPR011141">
    <property type="entry name" value="Polyketide_synthase_type-III"/>
</dbReference>
<dbReference type="InterPro" id="IPR016039">
    <property type="entry name" value="Thiolase-like"/>
</dbReference>
<dbReference type="PANTHER" id="PTHR11877:SF62">
    <property type="entry name" value="CHALCONE SYNTHASE 7"/>
    <property type="match status" value="1"/>
</dbReference>
<dbReference type="PANTHER" id="PTHR11877">
    <property type="entry name" value="HYDROXYMETHYLGLUTARYL-COA SYNTHASE"/>
    <property type="match status" value="1"/>
</dbReference>
<dbReference type="Pfam" id="PF02797">
    <property type="entry name" value="Chal_sti_synt_C"/>
    <property type="match status" value="1"/>
</dbReference>
<dbReference type="Pfam" id="PF00195">
    <property type="entry name" value="Chal_sti_synt_N"/>
    <property type="match status" value="1"/>
</dbReference>
<dbReference type="PIRSF" id="PIRSF000451">
    <property type="entry name" value="PKS_III"/>
    <property type="match status" value="1"/>
</dbReference>
<dbReference type="SUPFAM" id="SSF53901">
    <property type="entry name" value="Thiolase-like"/>
    <property type="match status" value="2"/>
</dbReference>
<dbReference type="PROSITE" id="PS00441">
    <property type="entry name" value="CHALCONE_SYNTH"/>
    <property type="match status" value="1"/>
</dbReference>
<accession>P51083</accession>
<name>CHS1_TRISU</name>
<proteinExistence type="inferred from homology"/>
<organism>
    <name type="scientific">Trifolium subterraneum</name>
    <name type="common">Subterranean clover</name>
    <dbReference type="NCBI Taxonomy" id="3900"/>
    <lineage>
        <taxon>Eukaryota</taxon>
        <taxon>Viridiplantae</taxon>
        <taxon>Streptophyta</taxon>
        <taxon>Embryophyta</taxon>
        <taxon>Tracheophyta</taxon>
        <taxon>Spermatophyta</taxon>
        <taxon>Magnoliopsida</taxon>
        <taxon>eudicotyledons</taxon>
        <taxon>Gunneridae</taxon>
        <taxon>Pentapetalae</taxon>
        <taxon>rosids</taxon>
        <taxon>fabids</taxon>
        <taxon>Fabales</taxon>
        <taxon>Fabaceae</taxon>
        <taxon>Papilionoideae</taxon>
        <taxon>50 kb inversion clade</taxon>
        <taxon>NPAAA clade</taxon>
        <taxon>Hologalegina</taxon>
        <taxon>IRL clade</taxon>
        <taxon>Trifolieae</taxon>
        <taxon>Trifolium</taxon>
    </lineage>
</organism>
<evidence type="ECO:0000255" key="1">
    <source>
        <dbReference type="PROSITE-ProRule" id="PRU10023"/>
    </source>
</evidence>
<evidence type="ECO:0000305" key="2"/>